<gene>
    <name type="primary">dhfrXV</name>
    <name type="synonym">dfrXV</name>
</gene>
<organism>
    <name type="scientific">Escherichia coli</name>
    <dbReference type="NCBI Taxonomy" id="562"/>
    <lineage>
        <taxon>Bacteria</taxon>
        <taxon>Pseudomonadati</taxon>
        <taxon>Pseudomonadota</taxon>
        <taxon>Gammaproteobacteria</taxon>
        <taxon>Enterobacterales</taxon>
        <taxon>Enterobacteriaceae</taxon>
        <taxon>Escherichia</taxon>
    </lineage>
</organism>
<comment type="function">
    <text evidence="1">Key enzyme in folate metabolism. Catalyzes an essential reaction for de novo glycine and purine synthesis, and for DNA precursor synthesis (By similarity).</text>
</comment>
<comment type="catalytic activity">
    <reaction evidence="2">
        <text>(6S)-5,6,7,8-tetrahydrofolate + NADP(+) = 7,8-dihydrofolate + NADPH + H(+)</text>
        <dbReference type="Rhea" id="RHEA:15009"/>
        <dbReference type="ChEBI" id="CHEBI:15378"/>
        <dbReference type="ChEBI" id="CHEBI:57451"/>
        <dbReference type="ChEBI" id="CHEBI:57453"/>
        <dbReference type="ChEBI" id="CHEBI:57783"/>
        <dbReference type="ChEBI" id="CHEBI:58349"/>
        <dbReference type="EC" id="1.5.1.3"/>
    </reaction>
</comment>
<comment type="pathway">
    <text>Cofactor biosynthesis; tetrahydrofolate biosynthesis; 5,6,7,8-tetrahydrofolate from 7,8-dihydrofolate: step 1/1.</text>
</comment>
<comment type="subunit">
    <text evidence="1">Homodimer.</text>
</comment>
<comment type="similarity">
    <text evidence="3">Belongs to the dihydrofolate reductase family.</text>
</comment>
<evidence type="ECO:0000250" key="1"/>
<evidence type="ECO:0000255" key="2">
    <source>
        <dbReference type="PROSITE-ProRule" id="PRU00660"/>
    </source>
</evidence>
<evidence type="ECO:0000305" key="3"/>
<feature type="chain" id="PRO_0000186430" description="Dihydrofolate reductase type 15">
    <location>
        <begin position="1"/>
        <end position="157"/>
    </location>
</feature>
<feature type="domain" description="DHFR" evidence="2">
    <location>
        <begin position="2"/>
        <end position="156"/>
    </location>
</feature>
<proteinExistence type="inferred from homology"/>
<protein>
    <recommendedName>
        <fullName>Dihydrofolate reductase type 15</fullName>
        <ecNumber>1.5.1.3</ecNumber>
    </recommendedName>
    <alternativeName>
        <fullName>Dihydrofolate reductase type XV</fullName>
    </alternativeName>
</protein>
<sequence>MKLSLMAAISKNGVIGNGPDIPWSAKGEQLLFKAITYNQWLLVGRKTFESMGALPNRKYAVVTRSSFTSSDENVLVFPSIDEALNHLKTITDHVIVSGGGEIYKSLIDKVDTLHISTIDIEPEGDVYFPEIPSSFRPVFSQDFVSNINYSYQIWQKG</sequence>
<accession>P78218</accession>
<keyword id="KW-0046">Antibiotic resistance</keyword>
<keyword id="KW-0487">Methotrexate resistance</keyword>
<keyword id="KW-0521">NADP</keyword>
<keyword id="KW-0554">One-carbon metabolism</keyword>
<keyword id="KW-0560">Oxidoreductase</keyword>
<keyword id="KW-0817">Trimethoprim resistance</keyword>
<name>DYR15_ECOLX</name>
<reference key="1">
    <citation type="submission" date="1996-12" db="EMBL/GenBank/DDBJ databases">
        <authorList>
            <person name="Adrian P.V."/>
            <person name="du Plessis M."/>
            <person name="Klugman K.P."/>
            <person name="Amyes S.G."/>
        </authorList>
    </citation>
    <scope>NUCLEOTIDE SEQUENCE [GENOMIC DNA]</scope>
    <source>
        <strain>UI14</strain>
    </source>
</reference>
<dbReference type="EC" id="1.5.1.3"/>
<dbReference type="EMBL" id="Z83311">
    <property type="protein sequence ID" value="CAB05887.1"/>
    <property type="molecule type" value="Genomic_DNA"/>
</dbReference>
<dbReference type="SMR" id="P78218"/>
<dbReference type="CARD" id="ARO:3003013">
    <property type="molecule name" value="dfrA15"/>
    <property type="mechanism identifier" value="ARO:0001002"/>
    <property type="mechanism name" value="antibiotic target replacement"/>
</dbReference>
<dbReference type="KEGG" id="ag:CAB05887"/>
<dbReference type="UniPathway" id="UPA00077">
    <property type="reaction ID" value="UER00158"/>
</dbReference>
<dbReference type="GO" id="GO:0004146">
    <property type="term" value="F:dihydrofolate reductase activity"/>
    <property type="evidence" value="ECO:0007669"/>
    <property type="project" value="UniProtKB-EC"/>
</dbReference>
<dbReference type="GO" id="GO:0050661">
    <property type="term" value="F:NADP binding"/>
    <property type="evidence" value="ECO:0007669"/>
    <property type="project" value="InterPro"/>
</dbReference>
<dbReference type="GO" id="GO:0046452">
    <property type="term" value="P:dihydrofolate metabolic process"/>
    <property type="evidence" value="ECO:0007669"/>
    <property type="project" value="TreeGrafter"/>
</dbReference>
<dbReference type="GO" id="GO:0046655">
    <property type="term" value="P:folic acid metabolic process"/>
    <property type="evidence" value="ECO:0007669"/>
    <property type="project" value="TreeGrafter"/>
</dbReference>
<dbReference type="GO" id="GO:0006730">
    <property type="term" value="P:one-carbon metabolic process"/>
    <property type="evidence" value="ECO:0007669"/>
    <property type="project" value="UniProtKB-KW"/>
</dbReference>
<dbReference type="GO" id="GO:0046677">
    <property type="term" value="P:response to antibiotic"/>
    <property type="evidence" value="ECO:0007669"/>
    <property type="project" value="UniProtKB-KW"/>
</dbReference>
<dbReference type="GO" id="GO:0031427">
    <property type="term" value="P:response to methotrexate"/>
    <property type="evidence" value="ECO:0007669"/>
    <property type="project" value="UniProtKB-KW"/>
</dbReference>
<dbReference type="GO" id="GO:0046654">
    <property type="term" value="P:tetrahydrofolate biosynthetic process"/>
    <property type="evidence" value="ECO:0007669"/>
    <property type="project" value="UniProtKB-UniPathway"/>
</dbReference>
<dbReference type="CDD" id="cd00209">
    <property type="entry name" value="DHFR"/>
    <property type="match status" value="1"/>
</dbReference>
<dbReference type="Gene3D" id="3.40.430.10">
    <property type="entry name" value="Dihydrofolate Reductase, subunit A"/>
    <property type="match status" value="1"/>
</dbReference>
<dbReference type="InterPro" id="IPR012259">
    <property type="entry name" value="DHFR"/>
</dbReference>
<dbReference type="InterPro" id="IPR024072">
    <property type="entry name" value="DHFR-like_dom_sf"/>
</dbReference>
<dbReference type="InterPro" id="IPR017925">
    <property type="entry name" value="DHFR_CS"/>
</dbReference>
<dbReference type="InterPro" id="IPR001796">
    <property type="entry name" value="DHFR_dom"/>
</dbReference>
<dbReference type="NCBIfam" id="NF000330">
    <property type="entry name" value="trim_DfrA1_like"/>
    <property type="match status" value="1"/>
</dbReference>
<dbReference type="PANTHER" id="PTHR48069">
    <property type="entry name" value="DIHYDROFOLATE REDUCTASE"/>
    <property type="match status" value="1"/>
</dbReference>
<dbReference type="PANTHER" id="PTHR48069:SF3">
    <property type="entry name" value="DIHYDROFOLATE REDUCTASE"/>
    <property type="match status" value="1"/>
</dbReference>
<dbReference type="Pfam" id="PF00186">
    <property type="entry name" value="DHFR_1"/>
    <property type="match status" value="1"/>
</dbReference>
<dbReference type="PRINTS" id="PR00070">
    <property type="entry name" value="DHFR"/>
</dbReference>
<dbReference type="SUPFAM" id="SSF53597">
    <property type="entry name" value="Dihydrofolate reductase-like"/>
    <property type="match status" value="1"/>
</dbReference>
<dbReference type="PROSITE" id="PS00075">
    <property type="entry name" value="DHFR_1"/>
    <property type="match status" value="1"/>
</dbReference>
<dbReference type="PROSITE" id="PS51330">
    <property type="entry name" value="DHFR_2"/>
    <property type="match status" value="1"/>
</dbReference>